<dbReference type="EMBL" id="AABR03095589">
    <property type="status" value="NOT_ANNOTATED_CDS"/>
    <property type="molecule type" value="Genomic_DNA"/>
</dbReference>
<dbReference type="SMR" id="P0C7L8"/>
<dbReference type="FunCoup" id="P0C7L8">
    <property type="interactions" value="160"/>
</dbReference>
<dbReference type="STRING" id="10116.ENSRNOP00000019992"/>
<dbReference type="iPTMnet" id="P0C7L8"/>
<dbReference type="PhosphoSitePlus" id="P0C7L8"/>
<dbReference type="PaxDb" id="10116-ENSRNOP00000019992"/>
<dbReference type="UCSC" id="RGD:1583926">
    <property type="organism name" value="rat"/>
</dbReference>
<dbReference type="AGR" id="RGD:1583926"/>
<dbReference type="RGD" id="1583926">
    <property type="gene designation" value="Ppp1r3e"/>
</dbReference>
<dbReference type="eggNOG" id="KOG3986">
    <property type="taxonomic scope" value="Eukaryota"/>
</dbReference>
<dbReference type="InParanoid" id="P0C7L8"/>
<dbReference type="PhylomeDB" id="P0C7L8"/>
<dbReference type="PRO" id="PR:P0C7L8"/>
<dbReference type="Proteomes" id="UP000002494">
    <property type="component" value="Unplaced"/>
</dbReference>
<dbReference type="GO" id="GO:0042587">
    <property type="term" value="C:glycogen granule"/>
    <property type="evidence" value="ECO:0000314"/>
    <property type="project" value="RGD"/>
</dbReference>
<dbReference type="GO" id="GO:0000164">
    <property type="term" value="C:protein phosphatase type 1 complex"/>
    <property type="evidence" value="ECO:0000318"/>
    <property type="project" value="GO_Central"/>
</dbReference>
<dbReference type="GO" id="GO:0050196">
    <property type="term" value="F:[phosphorylase] phosphatase activity"/>
    <property type="evidence" value="ECO:0000315"/>
    <property type="project" value="UniProtKB"/>
</dbReference>
<dbReference type="GO" id="GO:2001069">
    <property type="term" value="F:glycogen binding"/>
    <property type="evidence" value="ECO:0000318"/>
    <property type="project" value="GO_Central"/>
</dbReference>
<dbReference type="GO" id="GO:0008157">
    <property type="term" value="F:protein phosphatase 1 binding"/>
    <property type="evidence" value="ECO:0000318"/>
    <property type="project" value="GO_Central"/>
</dbReference>
<dbReference type="GO" id="GO:0005977">
    <property type="term" value="P:glycogen metabolic process"/>
    <property type="evidence" value="ECO:0007669"/>
    <property type="project" value="UniProtKB-KW"/>
</dbReference>
<dbReference type="GO" id="GO:0045725">
    <property type="term" value="P:positive regulation of glycogen biosynthetic process"/>
    <property type="evidence" value="ECO:0000315"/>
    <property type="project" value="UniProtKB"/>
</dbReference>
<dbReference type="GO" id="GO:0005979">
    <property type="term" value="P:regulation of glycogen biosynthetic process"/>
    <property type="evidence" value="ECO:0000314"/>
    <property type="project" value="RGD"/>
</dbReference>
<dbReference type="GO" id="GO:0005981">
    <property type="term" value="P:regulation of glycogen catabolic process"/>
    <property type="evidence" value="ECO:0000314"/>
    <property type="project" value="RGD"/>
</dbReference>
<dbReference type="FunFam" id="2.60.40.2440:FF:000002">
    <property type="entry name" value="Protein phosphatase 1 regulatory subunit 3E"/>
    <property type="match status" value="1"/>
</dbReference>
<dbReference type="Gene3D" id="2.60.40.2440">
    <property type="entry name" value="Carbohydrate binding type-21 domain"/>
    <property type="match status" value="1"/>
</dbReference>
<dbReference type="InterPro" id="IPR005036">
    <property type="entry name" value="CBM21_dom"/>
</dbReference>
<dbReference type="InterPro" id="IPR038175">
    <property type="entry name" value="CBM21_dom_sf"/>
</dbReference>
<dbReference type="InterPro" id="IPR050782">
    <property type="entry name" value="PP1_regulatory_subunit_3"/>
</dbReference>
<dbReference type="PANTHER" id="PTHR12307">
    <property type="entry name" value="PROTEIN PHOSPHATASE 1 REGULATORY SUBUNIT"/>
    <property type="match status" value="1"/>
</dbReference>
<dbReference type="PANTHER" id="PTHR12307:SF20">
    <property type="entry name" value="PROTEIN PHOSPHATASE 1 REGULATORY SUBUNIT 3E"/>
    <property type="match status" value="1"/>
</dbReference>
<dbReference type="Pfam" id="PF03370">
    <property type="entry name" value="CBM_21"/>
    <property type="match status" value="1"/>
</dbReference>
<dbReference type="PROSITE" id="PS51159">
    <property type="entry name" value="CBM21"/>
    <property type="match status" value="1"/>
</dbReference>
<proteinExistence type="evidence at transcript level"/>
<feature type="chain" id="PRO_0000338640" description="Protein phosphatase 1 regulatory subunit 3E">
    <location>
        <begin position="1"/>
        <end position="279"/>
    </location>
</feature>
<feature type="domain" description="CBM21" evidence="3">
    <location>
        <begin position="154"/>
        <end position="259"/>
    </location>
</feature>
<feature type="region of interest" description="Disordered" evidence="4">
    <location>
        <begin position="28"/>
        <end position="89"/>
    </location>
</feature>
<feature type="region of interest" description="Glycogen-binding motif" evidence="1">
    <location>
        <begin position="176"/>
        <end position="198"/>
    </location>
</feature>
<feature type="region of interest" description="Substrate-binding motif" evidence="1">
    <location>
        <begin position="248"/>
        <end position="256"/>
    </location>
</feature>
<feature type="short sequence motif" description="PP1-binding motif">
    <location>
        <begin position="87"/>
        <end position="90"/>
    </location>
</feature>
<feature type="compositionally biased region" description="Basic residues" evidence="4">
    <location>
        <begin position="51"/>
        <end position="65"/>
    </location>
</feature>
<feature type="modified residue" description="Phosphoserine" evidence="2">
    <location>
        <position position="16"/>
    </location>
</feature>
<feature type="modified residue" description="Phosphoserine" evidence="2">
    <location>
        <position position="33"/>
    </location>
</feature>
<feature type="modified residue" description="Phosphoserine" evidence="2">
    <location>
        <position position="66"/>
    </location>
</feature>
<feature type="sequence conflict" description="In Ref. 2; AABR03095589." evidence="6" ref="2">
    <original>P</original>
    <variation>A</variation>
    <location>
        <position position="91"/>
    </location>
</feature>
<reference key="1">
    <citation type="journal article" date="2005" name="FEBS J.">
        <title>A novel glycogen-targeting subunit of protein phosphatase 1 that is regulated by insulin and shows differential tissue distribution in humans and rodents.</title>
        <authorList>
            <person name="Munro S."/>
            <person name="Ceulemans H."/>
            <person name="Bollen M."/>
            <person name="Diplexcito J."/>
            <person name="Cohen P.T.W."/>
        </authorList>
    </citation>
    <scope>NUCLEOTIDE SEQUENCE [MRNA]</scope>
    <scope>MOTIF</scope>
    <scope>FUNCTION</scope>
    <scope>TISSUE SPECIFICITY</scope>
</reference>
<reference key="2">
    <citation type="journal article" date="2004" name="Nature">
        <title>Genome sequence of the Brown Norway rat yields insights into mammalian evolution.</title>
        <authorList>
            <person name="Gibbs R.A."/>
            <person name="Weinstock G.M."/>
            <person name="Metzker M.L."/>
            <person name="Muzny D.M."/>
            <person name="Sodergren E.J."/>
            <person name="Scherer S."/>
            <person name="Scott G."/>
            <person name="Steffen D."/>
            <person name="Worley K.C."/>
            <person name="Burch P.E."/>
            <person name="Okwuonu G."/>
            <person name="Hines S."/>
            <person name="Lewis L."/>
            <person name="Deramo C."/>
            <person name="Delgado O."/>
            <person name="Dugan-Rocha S."/>
            <person name="Miner G."/>
            <person name="Morgan M."/>
            <person name="Hawes A."/>
            <person name="Gill R."/>
            <person name="Holt R.A."/>
            <person name="Adams M.D."/>
            <person name="Amanatides P.G."/>
            <person name="Baden-Tillson H."/>
            <person name="Barnstead M."/>
            <person name="Chin S."/>
            <person name="Evans C.A."/>
            <person name="Ferriera S."/>
            <person name="Fosler C."/>
            <person name="Glodek A."/>
            <person name="Gu Z."/>
            <person name="Jennings D."/>
            <person name="Kraft C.L."/>
            <person name="Nguyen T."/>
            <person name="Pfannkoch C.M."/>
            <person name="Sitter C."/>
            <person name="Sutton G.G."/>
            <person name="Venter J.C."/>
            <person name="Woodage T."/>
            <person name="Smith D."/>
            <person name="Lee H.-M."/>
            <person name="Gustafson E."/>
            <person name="Cahill P."/>
            <person name="Kana A."/>
            <person name="Doucette-Stamm L."/>
            <person name="Weinstock K."/>
            <person name="Fechtel K."/>
            <person name="Weiss R.B."/>
            <person name="Dunn D.M."/>
            <person name="Green E.D."/>
            <person name="Blakesley R.W."/>
            <person name="Bouffard G.G."/>
            <person name="De Jong P.J."/>
            <person name="Osoegawa K."/>
            <person name="Zhu B."/>
            <person name="Marra M."/>
            <person name="Schein J."/>
            <person name="Bosdet I."/>
            <person name="Fjell C."/>
            <person name="Jones S."/>
            <person name="Krzywinski M."/>
            <person name="Mathewson C."/>
            <person name="Siddiqui A."/>
            <person name="Wye N."/>
            <person name="McPherson J."/>
            <person name="Zhao S."/>
            <person name="Fraser C.M."/>
            <person name="Shetty J."/>
            <person name="Shatsman S."/>
            <person name="Geer K."/>
            <person name="Chen Y."/>
            <person name="Abramzon S."/>
            <person name="Nierman W.C."/>
            <person name="Havlak P.H."/>
            <person name="Chen R."/>
            <person name="Durbin K.J."/>
            <person name="Egan A."/>
            <person name="Ren Y."/>
            <person name="Song X.-Z."/>
            <person name="Li B."/>
            <person name="Liu Y."/>
            <person name="Qin X."/>
            <person name="Cawley S."/>
            <person name="Cooney A.J."/>
            <person name="D'Souza L.M."/>
            <person name="Martin K."/>
            <person name="Wu J.Q."/>
            <person name="Gonzalez-Garay M.L."/>
            <person name="Jackson A.R."/>
            <person name="Kalafus K.J."/>
            <person name="McLeod M.P."/>
            <person name="Milosavljevic A."/>
            <person name="Virk D."/>
            <person name="Volkov A."/>
            <person name="Wheeler D.A."/>
            <person name="Zhang Z."/>
            <person name="Bailey J.A."/>
            <person name="Eichler E.E."/>
            <person name="Tuzun E."/>
            <person name="Birney E."/>
            <person name="Mongin E."/>
            <person name="Ureta-Vidal A."/>
            <person name="Woodwark C."/>
            <person name="Zdobnov E."/>
            <person name="Bork P."/>
            <person name="Suyama M."/>
            <person name="Torrents D."/>
            <person name="Alexandersson M."/>
            <person name="Trask B.J."/>
            <person name="Young J.M."/>
            <person name="Huang H."/>
            <person name="Wang H."/>
            <person name="Xing H."/>
            <person name="Daniels S."/>
            <person name="Gietzen D."/>
            <person name="Schmidt J."/>
            <person name="Stevens K."/>
            <person name="Vitt U."/>
            <person name="Wingrove J."/>
            <person name="Camara F."/>
            <person name="Mar Alba M."/>
            <person name="Abril J.F."/>
            <person name="Guigo R."/>
            <person name="Smit A."/>
            <person name="Dubchak I."/>
            <person name="Rubin E.M."/>
            <person name="Couronne O."/>
            <person name="Poliakov A."/>
            <person name="Huebner N."/>
            <person name="Ganten D."/>
            <person name="Goesele C."/>
            <person name="Hummel O."/>
            <person name="Kreitler T."/>
            <person name="Lee Y.-A."/>
            <person name="Monti J."/>
            <person name="Schulz H."/>
            <person name="Zimdahl H."/>
            <person name="Himmelbauer H."/>
            <person name="Lehrach H."/>
            <person name="Jacob H.J."/>
            <person name="Bromberg S."/>
            <person name="Gullings-Handley J."/>
            <person name="Jensen-Seaman M.I."/>
            <person name="Kwitek A.E."/>
            <person name="Lazar J."/>
            <person name="Pasko D."/>
            <person name="Tonellato P.J."/>
            <person name="Twigger S."/>
            <person name="Ponting C.P."/>
            <person name="Duarte J.M."/>
            <person name="Rice S."/>
            <person name="Goodstadt L."/>
            <person name="Beatson S.A."/>
            <person name="Emes R.D."/>
            <person name="Winter E.E."/>
            <person name="Webber C."/>
            <person name="Brandt P."/>
            <person name="Nyakatura G."/>
            <person name="Adetobi M."/>
            <person name="Chiaromonte F."/>
            <person name="Elnitski L."/>
            <person name="Eswara P."/>
            <person name="Hardison R.C."/>
            <person name="Hou M."/>
            <person name="Kolbe D."/>
            <person name="Makova K."/>
            <person name="Miller W."/>
            <person name="Nekrutenko A."/>
            <person name="Riemer C."/>
            <person name="Schwartz S."/>
            <person name="Taylor J."/>
            <person name="Yang S."/>
            <person name="Zhang Y."/>
            <person name="Lindpaintner K."/>
            <person name="Andrews T.D."/>
            <person name="Caccamo M."/>
            <person name="Clamp M."/>
            <person name="Clarke L."/>
            <person name="Curwen V."/>
            <person name="Durbin R.M."/>
            <person name="Eyras E."/>
            <person name="Searle S.M."/>
            <person name="Cooper G.M."/>
            <person name="Batzoglou S."/>
            <person name="Brudno M."/>
            <person name="Sidow A."/>
            <person name="Stone E.A."/>
            <person name="Payseur B.A."/>
            <person name="Bourque G."/>
            <person name="Lopez-Otin C."/>
            <person name="Puente X.S."/>
            <person name="Chakrabarti K."/>
            <person name="Chatterji S."/>
            <person name="Dewey C."/>
            <person name="Pachter L."/>
            <person name="Bray N."/>
            <person name="Yap V.B."/>
            <person name="Caspi A."/>
            <person name="Tesler G."/>
            <person name="Pevzner P.A."/>
            <person name="Haussler D."/>
            <person name="Roskin K.M."/>
            <person name="Baertsch R."/>
            <person name="Clawson H."/>
            <person name="Furey T.S."/>
            <person name="Hinrichs A.S."/>
            <person name="Karolchik D."/>
            <person name="Kent W.J."/>
            <person name="Rosenbloom K.R."/>
            <person name="Trumbower H."/>
            <person name="Weirauch M."/>
            <person name="Cooper D.N."/>
            <person name="Stenson P.D."/>
            <person name="Ma B."/>
            <person name="Brent M."/>
            <person name="Arumugam M."/>
            <person name="Shteynberg D."/>
            <person name="Copley R.R."/>
            <person name="Taylor M.S."/>
            <person name="Riethman H."/>
            <person name="Mudunuri U."/>
            <person name="Peterson J."/>
            <person name="Guyer M."/>
            <person name="Felsenfeld A."/>
            <person name="Old S."/>
            <person name="Mockrin S."/>
            <person name="Collins F.S."/>
        </authorList>
    </citation>
    <scope>NUCLEOTIDE SEQUENCE [LARGE SCALE GENOMIC DNA]</scope>
    <source>
        <strain>Brown Norway</strain>
    </source>
</reference>
<sequence>MSHERPPRNDIPRNLSFIAALTERAYYRSQRPSLEEESEEEPGEGGTRPGARSRAHVPGRGRRARSAPAGGGGARTARSRSPDTRKRVRFPDALGLELAVVRRFRPGEPPRVPRHVQVQLQRDALRHFAPCPPRTRGLQDARIALEPALEPGFAARLQAQRICLERADAGPLGVAGSARVLDLAYEKRVSVRWSADGWRSLRESPASYAGPAPAPPRADRFAFRLPAPPVGGALLFALRYRVTGREFWDNNGGRDYALLGPEHPGGAGAAEPQGWIHFI</sequence>
<protein>
    <recommendedName>
        <fullName>Protein phosphatase 1 regulatory subunit 3E</fullName>
    </recommendedName>
</protein>
<name>PPR3E_RAT</name>
<evidence type="ECO:0000250" key="1"/>
<evidence type="ECO:0000250" key="2">
    <source>
        <dbReference type="UniProtKB" id="Q9H7J1"/>
    </source>
</evidence>
<evidence type="ECO:0000255" key="3">
    <source>
        <dbReference type="PROSITE-ProRule" id="PRU00491"/>
    </source>
</evidence>
<evidence type="ECO:0000256" key="4">
    <source>
        <dbReference type="SAM" id="MobiDB-lite"/>
    </source>
</evidence>
<evidence type="ECO:0000269" key="5">
    <source>
    </source>
</evidence>
<evidence type="ECO:0000305" key="6"/>
<keyword id="KW-0119">Carbohydrate metabolism</keyword>
<keyword id="KW-0321">Glycogen metabolism</keyword>
<keyword id="KW-0597">Phosphoprotein</keyword>
<keyword id="KW-1185">Reference proteome</keyword>
<accession>P0C7L8</accession>
<comment type="function">
    <text evidence="5">Acts as a glycogen-targeting subunit for PP1. PP1 is involved in glycogen metabolism and contributes to the activation of glycogen synthase leading to an increase in glycogen synthesis.</text>
</comment>
<comment type="tissue specificity">
    <text evidence="5">Expressed in liver and heart, with low levels in skeletal muscle.</text>
</comment>
<comment type="domain">
    <text>The CBM21 domain is known to be involved in the localization to glycogen and is characteristic of some regulatory subunit of phosphatase complexes.</text>
</comment>
<organism>
    <name type="scientific">Rattus norvegicus</name>
    <name type="common">Rat</name>
    <dbReference type="NCBI Taxonomy" id="10116"/>
    <lineage>
        <taxon>Eukaryota</taxon>
        <taxon>Metazoa</taxon>
        <taxon>Chordata</taxon>
        <taxon>Craniata</taxon>
        <taxon>Vertebrata</taxon>
        <taxon>Euteleostomi</taxon>
        <taxon>Mammalia</taxon>
        <taxon>Eutheria</taxon>
        <taxon>Euarchontoglires</taxon>
        <taxon>Glires</taxon>
        <taxon>Rodentia</taxon>
        <taxon>Myomorpha</taxon>
        <taxon>Muroidea</taxon>
        <taxon>Muridae</taxon>
        <taxon>Murinae</taxon>
        <taxon>Rattus</taxon>
    </lineage>
</organism>
<gene>
    <name type="primary">Ppp1r3e</name>
</gene>